<dbReference type="EC" id="3.1.26.3" evidence="1"/>
<dbReference type="EMBL" id="AP008934">
    <property type="protein sequence ID" value="BAE18681.1"/>
    <property type="molecule type" value="Genomic_DNA"/>
</dbReference>
<dbReference type="RefSeq" id="WP_011303283.1">
    <property type="nucleotide sequence ID" value="NZ_MTGA01000034.1"/>
</dbReference>
<dbReference type="SMR" id="Q49X17"/>
<dbReference type="GeneID" id="66867748"/>
<dbReference type="KEGG" id="ssp:SSP1536"/>
<dbReference type="eggNOG" id="COG0571">
    <property type="taxonomic scope" value="Bacteria"/>
</dbReference>
<dbReference type="HOGENOM" id="CLU_000907_1_3_9"/>
<dbReference type="OrthoDB" id="9805026at2"/>
<dbReference type="Proteomes" id="UP000006371">
    <property type="component" value="Chromosome"/>
</dbReference>
<dbReference type="GO" id="GO:0005737">
    <property type="term" value="C:cytoplasm"/>
    <property type="evidence" value="ECO:0007669"/>
    <property type="project" value="UniProtKB-SubCell"/>
</dbReference>
<dbReference type="GO" id="GO:0003725">
    <property type="term" value="F:double-stranded RNA binding"/>
    <property type="evidence" value="ECO:0007669"/>
    <property type="project" value="TreeGrafter"/>
</dbReference>
<dbReference type="GO" id="GO:0046872">
    <property type="term" value="F:metal ion binding"/>
    <property type="evidence" value="ECO:0007669"/>
    <property type="project" value="UniProtKB-KW"/>
</dbReference>
<dbReference type="GO" id="GO:0004525">
    <property type="term" value="F:ribonuclease III activity"/>
    <property type="evidence" value="ECO:0007669"/>
    <property type="project" value="UniProtKB-UniRule"/>
</dbReference>
<dbReference type="GO" id="GO:0019843">
    <property type="term" value="F:rRNA binding"/>
    <property type="evidence" value="ECO:0007669"/>
    <property type="project" value="UniProtKB-KW"/>
</dbReference>
<dbReference type="GO" id="GO:0006397">
    <property type="term" value="P:mRNA processing"/>
    <property type="evidence" value="ECO:0007669"/>
    <property type="project" value="UniProtKB-UniRule"/>
</dbReference>
<dbReference type="GO" id="GO:0010468">
    <property type="term" value="P:regulation of gene expression"/>
    <property type="evidence" value="ECO:0007669"/>
    <property type="project" value="TreeGrafter"/>
</dbReference>
<dbReference type="GO" id="GO:0006364">
    <property type="term" value="P:rRNA processing"/>
    <property type="evidence" value="ECO:0007669"/>
    <property type="project" value="UniProtKB-UniRule"/>
</dbReference>
<dbReference type="GO" id="GO:0008033">
    <property type="term" value="P:tRNA processing"/>
    <property type="evidence" value="ECO:0007669"/>
    <property type="project" value="UniProtKB-KW"/>
</dbReference>
<dbReference type="CDD" id="cd10845">
    <property type="entry name" value="DSRM_RNAse_III_family"/>
    <property type="match status" value="1"/>
</dbReference>
<dbReference type="CDD" id="cd00593">
    <property type="entry name" value="RIBOc"/>
    <property type="match status" value="1"/>
</dbReference>
<dbReference type="FunFam" id="1.10.1520.10:FF:000001">
    <property type="entry name" value="Ribonuclease 3"/>
    <property type="match status" value="1"/>
</dbReference>
<dbReference type="FunFam" id="3.30.160.20:FF:000003">
    <property type="entry name" value="Ribonuclease 3"/>
    <property type="match status" value="1"/>
</dbReference>
<dbReference type="Gene3D" id="3.30.160.20">
    <property type="match status" value="1"/>
</dbReference>
<dbReference type="Gene3D" id="1.10.1520.10">
    <property type="entry name" value="Ribonuclease III domain"/>
    <property type="match status" value="1"/>
</dbReference>
<dbReference type="HAMAP" id="MF_00104">
    <property type="entry name" value="RNase_III"/>
    <property type="match status" value="1"/>
</dbReference>
<dbReference type="InterPro" id="IPR014720">
    <property type="entry name" value="dsRBD_dom"/>
</dbReference>
<dbReference type="InterPro" id="IPR011907">
    <property type="entry name" value="RNase_III"/>
</dbReference>
<dbReference type="InterPro" id="IPR000999">
    <property type="entry name" value="RNase_III_dom"/>
</dbReference>
<dbReference type="InterPro" id="IPR036389">
    <property type="entry name" value="RNase_III_sf"/>
</dbReference>
<dbReference type="NCBIfam" id="TIGR02191">
    <property type="entry name" value="RNaseIII"/>
    <property type="match status" value="1"/>
</dbReference>
<dbReference type="PANTHER" id="PTHR11207:SF0">
    <property type="entry name" value="RIBONUCLEASE 3"/>
    <property type="match status" value="1"/>
</dbReference>
<dbReference type="PANTHER" id="PTHR11207">
    <property type="entry name" value="RIBONUCLEASE III"/>
    <property type="match status" value="1"/>
</dbReference>
<dbReference type="Pfam" id="PF00035">
    <property type="entry name" value="dsrm"/>
    <property type="match status" value="1"/>
</dbReference>
<dbReference type="Pfam" id="PF14622">
    <property type="entry name" value="Ribonucleas_3_3"/>
    <property type="match status" value="1"/>
</dbReference>
<dbReference type="SMART" id="SM00358">
    <property type="entry name" value="DSRM"/>
    <property type="match status" value="1"/>
</dbReference>
<dbReference type="SMART" id="SM00535">
    <property type="entry name" value="RIBOc"/>
    <property type="match status" value="1"/>
</dbReference>
<dbReference type="SUPFAM" id="SSF54768">
    <property type="entry name" value="dsRNA-binding domain-like"/>
    <property type="match status" value="1"/>
</dbReference>
<dbReference type="SUPFAM" id="SSF69065">
    <property type="entry name" value="RNase III domain-like"/>
    <property type="match status" value="1"/>
</dbReference>
<dbReference type="PROSITE" id="PS50137">
    <property type="entry name" value="DS_RBD"/>
    <property type="match status" value="1"/>
</dbReference>
<dbReference type="PROSITE" id="PS00517">
    <property type="entry name" value="RNASE_3_1"/>
    <property type="match status" value="1"/>
</dbReference>
<dbReference type="PROSITE" id="PS50142">
    <property type="entry name" value="RNASE_3_2"/>
    <property type="match status" value="1"/>
</dbReference>
<accession>Q49X17</accession>
<protein>
    <recommendedName>
        <fullName evidence="1">Ribonuclease 3</fullName>
        <ecNumber evidence="1">3.1.26.3</ecNumber>
    </recommendedName>
    <alternativeName>
        <fullName evidence="1">Ribonuclease III</fullName>
        <shortName evidence="1">RNase III</shortName>
    </alternativeName>
</protein>
<keyword id="KW-0963">Cytoplasm</keyword>
<keyword id="KW-0255">Endonuclease</keyword>
<keyword id="KW-0378">Hydrolase</keyword>
<keyword id="KW-0460">Magnesium</keyword>
<keyword id="KW-0479">Metal-binding</keyword>
<keyword id="KW-0507">mRNA processing</keyword>
<keyword id="KW-0540">Nuclease</keyword>
<keyword id="KW-1185">Reference proteome</keyword>
<keyword id="KW-0694">RNA-binding</keyword>
<keyword id="KW-0698">rRNA processing</keyword>
<keyword id="KW-0699">rRNA-binding</keyword>
<keyword id="KW-0819">tRNA processing</keyword>
<gene>
    <name evidence="1" type="primary">rnc</name>
    <name type="ordered locus">SSP1536</name>
</gene>
<sequence>MTNQKKKEMVQTFQNKFEKKMQELNLDFNRVDLYQQAFSHSSFINDFNMNRLDHNERLEFLGDAVLELTVSRYLFDKYPELPEGNLTKMRATIVCEPSLVIFANKIQLNDLILLGKGEEKTGGRTRPSLVSDAFEAFVGALYLDQGLEAVWQFSEQIIFPYVEDDELDGVVDFKTQFQEYVHRQNKGDVTYRLINEEGPAHHRLFTSEVILEEDAVAEGKGKTKKESEQKAAERAYKILKNKNA</sequence>
<evidence type="ECO:0000255" key="1">
    <source>
        <dbReference type="HAMAP-Rule" id="MF_00104"/>
    </source>
</evidence>
<organism>
    <name type="scientific">Staphylococcus saprophyticus subsp. saprophyticus (strain ATCC 15305 / DSM 20229 / NCIMB 8711 / NCTC 7292 / S-41)</name>
    <dbReference type="NCBI Taxonomy" id="342451"/>
    <lineage>
        <taxon>Bacteria</taxon>
        <taxon>Bacillati</taxon>
        <taxon>Bacillota</taxon>
        <taxon>Bacilli</taxon>
        <taxon>Bacillales</taxon>
        <taxon>Staphylococcaceae</taxon>
        <taxon>Staphylococcus</taxon>
    </lineage>
</organism>
<proteinExistence type="inferred from homology"/>
<feature type="chain" id="PRO_0000228586" description="Ribonuclease 3">
    <location>
        <begin position="1"/>
        <end position="244"/>
    </location>
</feature>
<feature type="domain" description="RNase III" evidence="1">
    <location>
        <begin position="17"/>
        <end position="146"/>
    </location>
</feature>
<feature type="domain" description="DRBM" evidence="1">
    <location>
        <begin position="172"/>
        <end position="241"/>
    </location>
</feature>
<feature type="active site" evidence="1">
    <location>
        <position position="63"/>
    </location>
</feature>
<feature type="active site" evidence="1">
    <location>
        <position position="135"/>
    </location>
</feature>
<feature type="binding site" evidence="1">
    <location>
        <position position="59"/>
    </location>
    <ligand>
        <name>Mg(2+)</name>
        <dbReference type="ChEBI" id="CHEBI:18420"/>
    </ligand>
</feature>
<feature type="binding site" evidence="1">
    <location>
        <position position="132"/>
    </location>
    <ligand>
        <name>Mg(2+)</name>
        <dbReference type="ChEBI" id="CHEBI:18420"/>
    </ligand>
</feature>
<feature type="binding site" evidence="1">
    <location>
        <position position="135"/>
    </location>
    <ligand>
        <name>Mg(2+)</name>
        <dbReference type="ChEBI" id="CHEBI:18420"/>
    </ligand>
</feature>
<comment type="function">
    <text evidence="1">Digests double-stranded RNA. Involved in the processing of primary rRNA transcript to yield the immediate precursors to the large and small rRNAs (23S and 16S). Processes some mRNAs, and tRNAs when they are encoded in the rRNA operon. Processes pre-crRNA and tracrRNA of type II CRISPR loci if present in the organism.</text>
</comment>
<comment type="catalytic activity">
    <reaction evidence="1">
        <text>Endonucleolytic cleavage to 5'-phosphomonoester.</text>
        <dbReference type="EC" id="3.1.26.3"/>
    </reaction>
</comment>
<comment type="cofactor">
    <cofactor evidence="1">
        <name>Mg(2+)</name>
        <dbReference type="ChEBI" id="CHEBI:18420"/>
    </cofactor>
</comment>
<comment type="subunit">
    <text evidence="1">Homodimer.</text>
</comment>
<comment type="subcellular location">
    <subcellularLocation>
        <location evidence="1">Cytoplasm</location>
    </subcellularLocation>
</comment>
<comment type="similarity">
    <text evidence="1">Belongs to the ribonuclease III family.</text>
</comment>
<reference key="1">
    <citation type="journal article" date="2005" name="Proc. Natl. Acad. Sci. U.S.A.">
        <title>Whole genome sequence of Staphylococcus saprophyticus reveals the pathogenesis of uncomplicated urinary tract infection.</title>
        <authorList>
            <person name="Kuroda M."/>
            <person name="Yamashita A."/>
            <person name="Hirakawa H."/>
            <person name="Kumano M."/>
            <person name="Morikawa K."/>
            <person name="Higashide M."/>
            <person name="Maruyama A."/>
            <person name="Inose Y."/>
            <person name="Matoba K."/>
            <person name="Toh H."/>
            <person name="Kuhara S."/>
            <person name="Hattori M."/>
            <person name="Ohta T."/>
        </authorList>
    </citation>
    <scope>NUCLEOTIDE SEQUENCE [LARGE SCALE GENOMIC DNA]</scope>
    <source>
        <strain>ATCC 15305 / DSM 20229 / NCIMB 8711 / NCTC 7292 / S-41</strain>
    </source>
</reference>
<name>RNC_STAS1</name>